<keyword id="KW-0997">Cell inner membrane</keyword>
<keyword id="KW-1003">Cell membrane</keyword>
<keyword id="KW-0342">GTP-binding</keyword>
<keyword id="KW-0378">Hydrolase</keyword>
<keyword id="KW-0472">Membrane</keyword>
<keyword id="KW-0547">Nucleotide-binding</keyword>
<keyword id="KW-0648">Protein biosynthesis</keyword>
<comment type="function">
    <text evidence="1">Required for accurate and efficient protein synthesis under certain stress conditions. May act as a fidelity factor of the translation reaction, by catalyzing a one-codon backward translocation of tRNAs on improperly translocated ribosomes. Back-translocation proceeds from a post-translocation (POST) complex to a pre-translocation (PRE) complex, thus giving elongation factor G a second chance to translocate the tRNAs correctly. Binds to ribosomes in a GTP-dependent manner.</text>
</comment>
<comment type="catalytic activity">
    <reaction evidence="1">
        <text>GTP + H2O = GDP + phosphate + H(+)</text>
        <dbReference type="Rhea" id="RHEA:19669"/>
        <dbReference type="ChEBI" id="CHEBI:15377"/>
        <dbReference type="ChEBI" id="CHEBI:15378"/>
        <dbReference type="ChEBI" id="CHEBI:37565"/>
        <dbReference type="ChEBI" id="CHEBI:43474"/>
        <dbReference type="ChEBI" id="CHEBI:58189"/>
        <dbReference type="EC" id="3.6.5.n1"/>
    </reaction>
</comment>
<comment type="subcellular location">
    <subcellularLocation>
        <location evidence="1">Cell inner membrane</location>
        <topology evidence="1">Peripheral membrane protein</topology>
        <orientation evidence="1">Cytoplasmic side</orientation>
    </subcellularLocation>
</comment>
<comment type="similarity">
    <text evidence="1">Belongs to the TRAFAC class translation factor GTPase superfamily. Classic translation factor GTPase family. LepA subfamily.</text>
</comment>
<proteinExistence type="inferred from homology"/>
<feature type="chain" id="PRO_1000202448" description="Elongation factor 4">
    <location>
        <begin position="1"/>
        <end position="597"/>
    </location>
</feature>
<feature type="domain" description="tr-type G">
    <location>
        <begin position="2"/>
        <end position="184"/>
    </location>
</feature>
<feature type="binding site" evidence="1">
    <location>
        <begin position="14"/>
        <end position="19"/>
    </location>
    <ligand>
        <name>GTP</name>
        <dbReference type="ChEBI" id="CHEBI:37565"/>
    </ligand>
</feature>
<feature type="binding site" evidence="1">
    <location>
        <begin position="131"/>
        <end position="134"/>
    </location>
    <ligand>
        <name>GTP</name>
        <dbReference type="ChEBI" id="CHEBI:37565"/>
    </ligand>
</feature>
<sequence length="597" mass="66159">MKNIRNFSIIAHIDHGKSTLSDRIIQLCGGLSDREMEAQVLDSMDLERERGITIKAQSVTLDYKAQDGQVYQLNFIDTPGHVDFSYEVSRSLAACEGALLVVDAGQGVEAQTLANCYTAIEMDLEVVPVLNKIDLPAADPDRVAQEIEDIVGIDATDAVRCSAKTGVGVGDVLERLVRDIPAPEGEPEAPLQALIIDSWFDNYLGVVSLIRIKNGTLRKGDKVKVMTTGQTYNADRLGIFTPKQVDRDVLNCGEVGWLVCAIKDIHGAPVGDTLTLARNPADVALPGFKKVKPQVYAGLFPVSSDDYDAFRDALGKLSLNDASLFYEPETSTALGFGFRCGFLGLLHMEIIQERLEREYDLDLITTAPTVVYEVETTRNEVIYVDSPSKLPAVNNIQELREPIAECHMLLPQEFLGNVITLCIEKRGVQTNMVYHGNQVALTYEIPMAEVVLDFFDRLKSTSRGYASLDYGFKRFQASDMVRVDVMVNSERVDALALITHRANANVRGRELVEKMKELIPRQQFDIAIQAAIGNQIIARSTVKQLRKNVLAKCYGGDVSRKKKLLQKQKEGKKRMKQIGNVELPQEAFLAILHVGKD</sequence>
<accession>C5BAI0</accession>
<gene>
    <name evidence="1" type="primary">lepA</name>
    <name type="ordered locus">NT01EI_3035</name>
</gene>
<protein>
    <recommendedName>
        <fullName evidence="1">Elongation factor 4</fullName>
        <shortName evidence="1">EF-4</shortName>
        <ecNumber evidence="1">3.6.5.n1</ecNumber>
    </recommendedName>
    <alternativeName>
        <fullName evidence="1">Ribosomal back-translocase LepA</fullName>
    </alternativeName>
</protein>
<reference key="1">
    <citation type="submission" date="2009-03" db="EMBL/GenBank/DDBJ databases">
        <title>Complete genome sequence of Edwardsiella ictaluri 93-146.</title>
        <authorList>
            <person name="Williams M.L."/>
            <person name="Gillaspy A.F."/>
            <person name="Dyer D.W."/>
            <person name="Thune R.L."/>
            <person name="Waldbieser G.C."/>
            <person name="Schuster S.C."/>
            <person name="Gipson J."/>
            <person name="Zaitshik J."/>
            <person name="Landry C."/>
            <person name="Lawrence M.L."/>
        </authorList>
    </citation>
    <scope>NUCLEOTIDE SEQUENCE [LARGE SCALE GENOMIC DNA]</scope>
    <source>
        <strain>93-146</strain>
    </source>
</reference>
<dbReference type="EC" id="3.6.5.n1" evidence="1"/>
<dbReference type="EMBL" id="CP001600">
    <property type="protein sequence ID" value="ACR70187.1"/>
    <property type="molecule type" value="Genomic_DNA"/>
</dbReference>
<dbReference type="RefSeq" id="WP_015872276.1">
    <property type="nucleotide sequence ID" value="NZ_CP169062.1"/>
</dbReference>
<dbReference type="SMR" id="C5BAI0"/>
<dbReference type="STRING" id="67780.B6E78_07040"/>
<dbReference type="GeneID" id="69539909"/>
<dbReference type="KEGG" id="eic:NT01EI_3035"/>
<dbReference type="PATRIC" id="fig|634503.3.peg.2714"/>
<dbReference type="HOGENOM" id="CLU_009995_3_3_6"/>
<dbReference type="OrthoDB" id="9804431at2"/>
<dbReference type="Proteomes" id="UP000001485">
    <property type="component" value="Chromosome"/>
</dbReference>
<dbReference type="GO" id="GO:0005886">
    <property type="term" value="C:plasma membrane"/>
    <property type="evidence" value="ECO:0007669"/>
    <property type="project" value="UniProtKB-SubCell"/>
</dbReference>
<dbReference type="GO" id="GO:0005525">
    <property type="term" value="F:GTP binding"/>
    <property type="evidence" value="ECO:0007669"/>
    <property type="project" value="UniProtKB-UniRule"/>
</dbReference>
<dbReference type="GO" id="GO:0003924">
    <property type="term" value="F:GTPase activity"/>
    <property type="evidence" value="ECO:0007669"/>
    <property type="project" value="UniProtKB-UniRule"/>
</dbReference>
<dbReference type="GO" id="GO:0097216">
    <property type="term" value="F:guanosine tetraphosphate binding"/>
    <property type="evidence" value="ECO:0007669"/>
    <property type="project" value="UniProtKB-ARBA"/>
</dbReference>
<dbReference type="GO" id="GO:0043022">
    <property type="term" value="F:ribosome binding"/>
    <property type="evidence" value="ECO:0007669"/>
    <property type="project" value="UniProtKB-UniRule"/>
</dbReference>
<dbReference type="GO" id="GO:0003746">
    <property type="term" value="F:translation elongation factor activity"/>
    <property type="evidence" value="ECO:0007669"/>
    <property type="project" value="UniProtKB-UniRule"/>
</dbReference>
<dbReference type="GO" id="GO:0045727">
    <property type="term" value="P:positive regulation of translation"/>
    <property type="evidence" value="ECO:0007669"/>
    <property type="project" value="UniProtKB-UniRule"/>
</dbReference>
<dbReference type="CDD" id="cd03699">
    <property type="entry name" value="EF4_II"/>
    <property type="match status" value="1"/>
</dbReference>
<dbReference type="CDD" id="cd16260">
    <property type="entry name" value="EF4_III"/>
    <property type="match status" value="1"/>
</dbReference>
<dbReference type="CDD" id="cd01890">
    <property type="entry name" value="LepA"/>
    <property type="match status" value="1"/>
</dbReference>
<dbReference type="CDD" id="cd03709">
    <property type="entry name" value="lepA_C"/>
    <property type="match status" value="1"/>
</dbReference>
<dbReference type="FunFam" id="3.30.70.240:FF:000005">
    <property type="entry name" value="Elongation factor 4"/>
    <property type="match status" value="1"/>
</dbReference>
<dbReference type="FunFam" id="3.40.50.300:FF:000078">
    <property type="entry name" value="Elongation factor 4"/>
    <property type="match status" value="1"/>
</dbReference>
<dbReference type="FunFam" id="2.40.30.10:FF:000015">
    <property type="entry name" value="Translation factor GUF1, mitochondrial"/>
    <property type="match status" value="1"/>
</dbReference>
<dbReference type="FunFam" id="3.30.70.2570:FF:000001">
    <property type="entry name" value="Translation factor GUF1, mitochondrial"/>
    <property type="match status" value="1"/>
</dbReference>
<dbReference type="FunFam" id="3.30.70.870:FF:000004">
    <property type="entry name" value="Translation factor GUF1, mitochondrial"/>
    <property type="match status" value="1"/>
</dbReference>
<dbReference type="Gene3D" id="3.30.70.240">
    <property type="match status" value="1"/>
</dbReference>
<dbReference type="Gene3D" id="3.30.70.2570">
    <property type="entry name" value="Elongation factor 4, C-terminal domain"/>
    <property type="match status" value="1"/>
</dbReference>
<dbReference type="Gene3D" id="3.30.70.870">
    <property type="entry name" value="Elongation Factor G (Translational Gtpase), domain 3"/>
    <property type="match status" value="1"/>
</dbReference>
<dbReference type="Gene3D" id="3.40.50.300">
    <property type="entry name" value="P-loop containing nucleotide triphosphate hydrolases"/>
    <property type="match status" value="1"/>
</dbReference>
<dbReference type="Gene3D" id="2.40.30.10">
    <property type="entry name" value="Translation factors"/>
    <property type="match status" value="1"/>
</dbReference>
<dbReference type="HAMAP" id="MF_00071">
    <property type="entry name" value="LepA"/>
    <property type="match status" value="1"/>
</dbReference>
<dbReference type="InterPro" id="IPR006297">
    <property type="entry name" value="EF-4"/>
</dbReference>
<dbReference type="InterPro" id="IPR035647">
    <property type="entry name" value="EFG_III/V"/>
</dbReference>
<dbReference type="InterPro" id="IPR000640">
    <property type="entry name" value="EFG_V-like"/>
</dbReference>
<dbReference type="InterPro" id="IPR004161">
    <property type="entry name" value="EFTu-like_2"/>
</dbReference>
<dbReference type="InterPro" id="IPR031157">
    <property type="entry name" value="G_TR_CS"/>
</dbReference>
<dbReference type="InterPro" id="IPR038363">
    <property type="entry name" value="LepA_C_sf"/>
</dbReference>
<dbReference type="InterPro" id="IPR013842">
    <property type="entry name" value="LepA_CTD"/>
</dbReference>
<dbReference type="InterPro" id="IPR035654">
    <property type="entry name" value="LepA_IV"/>
</dbReference>
<dbReference type="InterPro" id="IPR027417">
    <property type="entry name" value="P-loop_NTPase"/>
</dbReference>
<dbReference type="InterPro" id="IPR005225">
    <property type="entry name" value="Small_GTP-bd"/>
</dbReference>
<dbReference type="InterPro" id="IPR000795">
    <property type="entry name" value="T_Tr_GTP-bd_dom"/>
</dbReference>
<dbReference type="NCBIfam" id="TIGR01393">
    <property type="entry name" value="lepA"/>
    <property type="match status" value="1"/>
</dbReference>
<dbReference type="NCBIfam" id="TIGR00231">
    <property type="entry name" value="small_GTP"/>
    <property type="match status" value="1"/>
</dbReference>
<dbReference type="PANTHER" id="PTHR43512:SF4">
    <property type="entry name" value="TRANSLATION FACTOR GUF1 HOMOLOG, CHLOROPLASTIC"/>
    <property type="match status" value="1"/>
</dbReference>
<dbReference type="PANTHER" id="PTHR43512">
    <property type="entry name" value="TRANSLATION FACTOR GUF1-RELATED"/>
    <property type="match status" value="1"/>
</dbReference>
<dbReference type="Pfam" id="PF00679">
    <property type="entry name" value="EFG_C"/>
    <property type="match status" value="1"/>
</dbReference>
<dbReference type="Pfam" id="PF00009">
    <property type="entry name" value="GTP_EFTU"/>
    <property type="match status" value="1"/>
</dbReference>
<dbReference type="Pfam" id="PF03144">
    <property type="entry name" value="GTP_EFTU_D2"/>
    <property type="match status" value="1"/>
</dbReference>
<dbReference type="Pfam" id="PF06421">
    <property type="entry name" value="LepA_C"/>
    <property type="match status" value="1"/>
</dbReference>
<dbReference type="PRINTS" id="PR00315">
    <property type="entry name" value="ELONGATNFCT"/>
</dbReference>
<dbReference type="SUPFAM" id="SSF54980">
    <property type="entry name" value="EF-G C-terminal domain-like"/>
    <property type="match status" value="2"/>
</dbReference>
<dbReference type="SUPFAM" id="SSF52540">
    <property type="entry name" value="P-loop containing nucleoside triphosphate hydrolases"/>
    <property type="match status" value="1"/>
</dbReference>
<dbReference type="PROSITE" id="PS00301">
    <property type="entry name" value="G_TR_1"/>
    <property type="match status" value="1"/>
</dbReference>
<dbReference type="PROSITE" id="PS51722">
    <property type="entry name" value="G_TR_2"/>
    <property type="match status" value="1"/>
</dbReference>
<organism>
    <name type="scientific">Edwardsiella ictaluri (strain 93-146)</name>
    <dbReference type="NCBI Taxonomy" id="634503"/>
    <lineage>
        <taxon>Bacteria</taxon>
        <taxon>Pseudomonadati</taxon>
        <taxon>Pseudomonadota</taxon>
        <taxon>Gammaproteobacteria</taxon>
        <taxon>Enterobacterales</taxon>
        <taxon>Hafniaceae</taxon>
        <taxon>Edwardsiella</taxon>
    </lineage>
</organism>
<name>LEPA_EDWI9</name>
<evidence type="ECO:0000255" key="1">
    <source>
        <dbReference type="HAMAP-Rule" id="MF_00071"/>
    </source>
</evidence>